<protein>
    <recommendedName>
        <fullName evidence="1">DNA gyrase inhibitor YacG</fullName>
    </recommendedName>
</protein>
<feature type="chain" id="PRO_1000130982" description="DNA gyrase inhibitor YacG">
    <location>
        <begin position="1"/>
        <end position="69"/>
    </location>
</feature>
<feature type="region of interest" description="Disordered" evidence="2">
    <location>
        <begin position="46"/>
        <end position="69"/>
    </location>
</feature>
<feature type="compositionally biased region" description="Acidic residues" evidence="2">
    <location>
        <begin position="59"/>
        <end position="69"/>
    </location>
</feature>
<feature type="binding site" evidence="1">
    <location>
        <position position="14"/>
    </location>
    <ligand>
        <name>Zn(2+)</name>
        <dbReference type="ChEBI" id="CHEBI:29105"/>
    </ligand>
</feature>
<feature type="binding site" evidence="1">
    <location>
        <position position="17"/>
    </location>
    <ligand>
        <name>Zn(2+)</name>
        <dbReference type="ChEBI" id="CHEBI:29105"/>
    </ligand>
</feature>
<feature type="binding site" evidence="1">
    <location>
        <position position="33"/>
    </location>
    <ligand>
        <name>Zn(2+)</name>
        <dbReference type="ChEBI" id="CHEBI:29105"/>
    </ligand>
</feature>
<feature type="binding site" evidence="1">
    <location>
        <position position="37"/>
    </location>
    <ligand>
        <name>Zn(2+)</name>
        <dbReference type="ChEBI" id="CHEBI:29105"/>
    </ligand>
</feature>
<reference key="1">
    <citation type="submission" date="2008-08" db="EMBL/GenBank/DDBJ databases">
        <title>Complete sequence of Vibrio fischeri strain MJ11.</title>
        <authorList>
            <person name="Mandel M.J."/>
            <person name="Stabb E.V."/>
            <person name="Ruby E.G."/>
            <person name="Ferriera S."/>
            <person name="Johnson J."/>
            <person name="Kravitz S."/>
            <person name="Beeson K."/>
            <person name="Sutton G."/>
            <person name="Rogers Y.-H."/>
            <person name="Friedman R."/>
            <person name="Frazier M."/>
            <person name="Venter J.C."/>
        </authorList>
    </citation>
    <scope>NUCLEOTIDE SEQUENCE [LARGE SCALE GENOMIC DNA]</scope>
    <source>
        <strain>MJ11</strain>
    </source>
</reference>
<name>YACG_ALIFM</name>
<accession>B5FB26</accession>
<dbReference type="EMBL" id="CP001139">
    <property type="protein sequence ID" value="ACH67298.1"/>
    <property type="molecule type" value="Genomic_DNA"/>
</dbReference>
<dbReference type="RefSeq" id="WP_012534335.1">
    <property type="nucleotide sequence ID" value="NC_011184.1"/>
</dbReference>
<dbReference type="SMR" id="B5FB26"/>
<dbReference type="KEGG" id="vfm:VFMJ11_2304"/>
<dbReference type="HOGENOM" id="CLU_178280_3_1_6"/>
<dbReference type="Proteomes" id="UP000001857">
    <property type="component" value="Chromosome I"/>
</dbReference>
<dbReference type="GO" id="GO:0008657">
    <property type="term" value="F:DNA topoisomerase type II (double strand cut, ATP-hydrolyzing) inhibitor activity"/>
    <property type="evidence" value="ECO:0007669"/>
    <property type="project" value="UniProtKB-UniRule"/>
</dbReference>
<dbReference type="GO" id="GO:0008270">
    <property type="term" value="F:zinc ion binding"/>
    <property type="evidence" value="ECO:0007669"/>
    <property type="project" value="UniProtKB-UniRule"/>
</dbReference>
<dbReference type="GO" id="GO:0006355">
    <property type="term" value="P:regulation of DNA-templated transcription"/>
    <property type="evidence" value="ECO:0007669"/>
    <property type="project" value="InterPro"/>
</dbReference>
<dbReference type="Gene3D" id="3.30.50.10">
    <property type="entry name" value="Erythroid Transcription Factor GATA-1, subunit A"/>
    <property type="match status" value="1"/>
</dbReference>
<dbReference type="HAMAP" id="MF_00649">
    <property type="entry name" value="DNA_gyrase_inhibitor_YacG"/>
    <property type="match status" value="1"/>
</dbReference>
<dbReference type="InterPro" id="IPR005584">
    <property type="entry name" value="DNA_gyrase_inhibitor_YacG"/>
</dbReference>
<dbReference type="InterPro" id="IPR013088">
    <property type="entry name" value="Znf_NHR/GATA"/>
</dbReference>
<dbReference type="NCBIfam" id="NF001638">
    <property type="entry name" value="PRK00418.1"/>
    <property type="match status" value="1"/>
</dbReference>
<dbReference type="PANTHER" id="PTHR36150">
    <property type="entry name" value="DNA GYRASE INHIBITOR YACG"/>
    <property type="match status" value="1"/>
</dbReference>
<dbReference type="PANTHER" id="PTHR36150:SF1">
    <property type="entry name" value="DNA GYRASE INHIBITOR YACG"/>
    <property type="match status" value="1"/>
</dbReference>
<dbReference type="Pfam" id="PF03884">
    <property type="entry name" value="YacG"/>
    <property type="match status" value="1"/>
</dbReference>
<dbReference type="SUPFAM" id="SSF57716">
    <property type="entry name" value="Glucocorticoid receptor-like (DNA-binding domain)"/>
    <property type="match status" value="1"/>
</dbReference>
<keyword id="KW-0479">Metal-binding</keyword>
<keyword id="KW-0862">Zinc</keyword>
<sequence>MTKPTTEQPTIVKCPTCQSAVVWNAESPFRPFCSKKCQMIDFGEWADEEKSIPGAPDMSDSDGWSEDQY</sequence>
<gene>
    <name evidence="1" type="primary">yacG</name>
    <name type="ordered locus">VFMJ11_2304</name>
</gene>
<proteinExistence type="inferred from homology"/>
<organism>
    <name type="scientific">Aliivibrio fischeri (strain MJ11)</name>
    <name type="common">Vibrio fischeri</name>
    <dbReference type="NCBI Taxonomy" id="388396"/>
    <lineage>
        <taxon>Bacteria</taxon>
        <taxon>Pseudomonadati</taxon>
        <taxon>Pseudomonadota</taxon>
        <taxon>Gammaproteobacteria</taxon>
        <taxon>Vibrionales</taxon>
        <taxon>Vibrionaceae</taxon>
        <taxon>Aliivibrio</taxon>
    </lineage>
</organism>
<comment type="function">
    <text evidence="1">Inhibits all the catalytic activities of DNA gyrase by preventing its interaction with DNA. Acts by binding directly to the C-terminal domain of GyrB, which probably disrupts DNA binding by the gyrase.</text>
</comment>
<comment type="cofactor">
    <cofactor evidence="1">
        <name>Zn(2+)</name>
        <dbReference type="ChEBI" id="CHEBI:29105"/>
    </cofactor>
    <text evidence="1">Binds 1 zinc ion.</text>
</comment>
<comment type="subunit">
    <text evidence="1">Interacts with GyrB.</text>
</comment>
<comment type="similarity">
    <text evidence="1">Belongs to the DNA gyrase inhibitor YacG family.</text>
</comment>
<evidence type="ECO:0000255" key="1">
    <source>
        <dbReference type="HAMAP-Rule" id="MF_00649"/>
    </source>
</evidence>
<evidence type="ECO:0000256" key="2">
    <source>
        <dbReference type="SAM" id="MobiDB-lite"/>
    </source>
</evidence>